<accession>Q1GSV9</accession>
<keyword id="KW-0378">Hydrolase</keyword>
<keyword id="KW-1185">Reference proteome</keyword>
<dbReference type="EC" id="3.6.1.-" evidence="1"/>
<dbReference type="EMBL" id="CP000356">
    <property type="protein sequence ID" value="ABF53263.1"/>
    <property type="molecule type" value="Genomic_DNA"/>
</dbReference>
<dbReference type="RefSeq" id="WP_011541843.1">
    <property type="nucleotide sequence ID" value="NC_008048.1"/>
</dbReference>
<dbReference type="SMR" id="Q1GSV9"/>
<dbReference type="STRING" id="317655.Sala_1550"/>
<dbReference type="KEGG" id="sal:Sala_1550"/>
<dbReference type="eggNOG" id="COG1051">
    <property type="taxonomic scope" value="Bacteria"/>
</dbReference>
<dbReference type="HOGENOM" id="CLU_087195_3_0_5"/>
<dbReference type="OrthoDB" id="9816040at2"/>
<dbReference type="Proteomes" id="UP000006578">
    <property type="component" value="Chromosome"/>
</dbReference>
<dbReference type="GO" id="GO:0034432">
    <property type="term" value="F:bis(5'-adenosyl)-pentaphosphatase activity"/>
    <property type="evidence" value="ECO:0007669"/>
    <property type="project" value="TreeGrafter"/>
</dbReference>
<dbReference type="GO" id="GO:0008893">
    <property type="term" value="F:guanosine-3',5'-bis(diphosphate) 3'-diphosphatase activity"/>
    <property type="evidence" value="ECO:0007669"/>
    <property type="project" value="TreeGrafter"/>
</dbReference>
<dbReference type="GO" id="GO:0006753">
    <property type="term" value="P:nucleoside phosphate metabolic process"/>
    <property type="evidence" value="ECO:0007669"/>
    <property type="project" value="TreeGrafter"/>
</dbReference>
<dbReference type="GO" id="GO:0019693">
    <property type="term" value="P:ribose phosphate metabolic process"/>
    <property type="evidence" value="ECO:0007669"/>
    <property type="project" value="TreeGrafter"/>
</dbReference>
<dbReference type="CDD" id="cd03671">
    <property type="entry name" value="NUDIX_Ap4A_hydrolase_plant_like"/>
    <property type="match status" value="1"/>
</dbReference>
<dbReference type="Gene3D" id="3.90.79.10">
    <property type="entry name" value="Nucleoside Triphosphate Pyrophosphohydrolase"/>
    <property type="match status" value="1"/>
</dbReference>
<dbReference type="HAMAP" id="MF_00298">
    <property type="entry name" value="Nudix_RppH"/>
    <property type="match status" value="1"/>
</dbReference>
<dbReference type="InterPro" id="IPR020476">
    <property type="entry name" value="Nudix_hydrolase"/>
</dbReference>
<dbReference type="InterPro" id="IPR015797">
    <property type="entry name" value="NUDIX_hydrolase-like_dom_sf"/>
</dbReference>
<dbReference type="InterPro" id="IPR020084">
    <property type="entry name" value="NUDIX_hydrolase_CS"/>
</dbReference>
<dbReference type="InterPro" id="IPR000086">
    <property type="entry name" value="NUDIX_hydrolase_dom"/>
</dbReference>
<dbReference type="InterPro" id="IPR022927">
    <property type="entry name" value="RppH"/>
</dbReference>
<dbReference type="NCBIfam" id="NF001938">
    <property type="entry name" value="PRK00714.1-5"/>
    <property type="match status" value="1"/>
</dbReference>
<dbReference type="PANTHER" id="PTHR11839:SF22">
    <property type="entry name" value="NUDIX HYDROLASE 26, CHLOROPLASTIC"/>
    <property type="match status" value="1"/>
</dbReference>
<dbReference type="PANTHER" id="PTHR11839">
    <property type="entry name" value="UDP/ADP-SUGAR PYROPHOSPHATASE"/>
    <property type="match status" value="1"/>
</dbReference>
<dbReference type="Pfam" id="PF00293">
    <property type="entry name" value="NUDIX"/>
    <property type="match status" value="1"/>
</dbReference>
<dbReference type="PRINTS" id="PR00502">
    <property type="entry name" value="NUDIXFAMILY"/>
</dbReference>
<dbReference type="SUPFAM" id="SSF55811">
    <property type="entry name" value="Nudix"/>
    <property type="match status" value="1"/>
</dbReference>
<dbReference type="PROSITE" id="PS51462">
    <property type="entry name" value="NUDIX"/>
    <property type="match status" value="1"/>
</dbReference>
<dbReference type="PROSITE" id="PS00893">
    <property type="entry name" value="NUDIX_BOX"/>
    <property type="match status" value="1"/>
</dbReference>
<organism>
    <name type="scientific">Sphingopyxis alaskensis (strain DSM 13593 / LMG 18877 / RB2256)</name>
    <name type="common">Sphingomonas alaskensis</name>
    <dbReference type="NCBI Taxonomy" id="317655"/>
    <lineage>
        <taxon>Bacteria</taxon>
        <taxon>Pseudomonadati</taxon>
        <taxon>Pseudomonadota</taxon>
        <taxon>Alphaproteobacteria</taxon>
        <taxon>Sphingomonadales</taxon>
        <taxon>Sphingomonadaceae</taxon>
        <taxon>Sphingopyxis</taxon>
    </lineage>
</organism>
<feature type="chain" id="PRO_1000191850" description="RNA pyrophosphohydrolase">
    <location>
        <begin position="1"/>
        <end position="158"/>
    </location>
</feature>
<feature type="domain" description="Nudix hydrolase" evidence="1">
    <location>
        <begin position="8"/>
        <end position="152"/>
    </location>
</feature>
<feature type="short sequence motif" description="Nudix box">
    <location>
        <begin position="42"/>
        <end position="63"/>
    </location>
</feature>
<reference key="1">
    <citation type="journal article" date="2009" name="Proc. Natl. Acad. Sci. U.S.A.">
        <title>The genomic basis of trophic strategy in marine bacteria.</title>
        <authorList>
            <person name="Lauro F.M."/>
            <person name="McDougald D."/>
            <person name="Thomas T."/>
            <person name="Williams T.J."/>
            <person name="Egan S."/>
            <person name="Rice S."/>
            <person name="DeMaere M.Z."/>
            <person name="Ting L."/>
            <person name="Ertan H."/>
            <person name="Johnson J."/>
            <person name="Ferriera S."/>
            <person name="Lapidus A."/>
            <person name="Anderson I."/>
            <person name="Kyrpides N."/>
            <person name="Munk A.C."/>
            <person name="Detter C."/>
            <person name="Han C.S."/>
            <person name="Brown M.V."/>
            <person name="Robb F.T."/>
            <person name="Kjelleberg S."/>
            <person name="Cavicchioli R."/>
        </authorList>
    </citation>
    <scope>NUCLEOTIDE SEQUENCE [LARGE SCALE GENOMIC DNA]</scope>
    <source>
        <strain>DSM 13593 / LMG 18877 / RB2256</strain>
    </source>
</reference>
<name>RPPH_SPHAL</name>
<protein>
    <recommendedName>
        <fullName evidence="1">RNA pyrophosphohydrolase</fullName>
        <ecNumber evidence="1">3.6.1.-</ecNumber>
    </recommendedName>
    <alternativeName>
        <fullName evidence="1">(Di)nucleoside polyphosphate hydrolase</fullName>
    </alternativeName>
</protein>
<proteinExistence type="inferred from homology"/>
<sequence>MIDHDKLPYRPCAGVMLANRDGRVFVGQRLDTSSEAWQMPQGGIDEGEDAEKAAIRELGEETGIHGGLVDIIARSREEYFYDLPDHLIGKMWGGKYRGQRQHWFLMRFMGEDSDIDIHTRHQEFRAWRWVDLGEIEKLIVPFKRALYRGLIEEFGPLV</sequence>
<evidence type="ECO:0000255" key="1">
    <source>
        <dbReference type="HAMAP-Rule" id="MF_00298"/>
    </source>
</evidence>
<gene>
    <name evidence="1" type="primary">rppH</name>
    <name evidence="1" type="synonym">nudH</name>
    <name type="ordered locus">Sala_1550</name>
</gene>
<comment type="function">
    <text evidence="1">Accelerates the degradation of transcripts by removing pyrophosphate from the 5'-end of triphosphorylated RNA, leading to a more labile monophosphorylated state that can stimulate subsequent ribonuclease cleavage.</text>
</comment>
<comment type="cofactor">
    <cofactor evidence="1">
        <name>a divalent metal cation</name>
        <dbReference type="ChEBI" id="CHEBI:60240"/>
    </cofactor>
</comment>
<comment type="similarity">
    <text evidence="1">Belongs to the Nudix hydrolase family. RppH subfamily.</text>
</comment>